<sequence length="260" mass="29127">MFDIGVNLTSSQFVKDRDDVVTRALAAGVSGMLLTGTNLHESQQAQKLAQRYACCWSTAGVHPHDSSQWQSETEDAIVALARQPDVVAIGECGLDFNRNFSTPQEQERAFQAQLRIAAELQMPVFMHCRDAHARFLALLEPWLDKLPGAVLHCFTGTREEMQECIDRGLYIGITGWVCDERRGLELRELLPFIPAEKLLIETDAPYLLPRDLTPKPASRRNEPAHLAHILARVAHWRGEDPQWLAATTDANVKTLFGIAF</sequence>
<reference key="1">
    <citation type="submission" date="2007-08" db="EMBL/GenBank/DDBJ databases">
        <authorList>
            <consortium name="The Citrobacter koseri Genome Sequencing Project"/>
            <person name="McClelland M."/>
            <person name="Sanderson E.K."/>
            <person name="Porwollik S."/>
            <person name="Spieth J."/>
            <person name="Clifton W.S."/>
            <person name="Latreille P."/>
            <person name="Courtney L."/>
            <person name="Wang C."/>
            <person name="Pepin K."/>
            <person name="Bhonagiri V."/>
            <person name="Nash W."/>
            <person name="Johnson M."/>
            <person name="Thiruvilangam P."/>
            <person name="Wilson R."/>
        </authorList>
    </citation>
    <scope>NUCLEOTIDE SEQUENCE [LARGE SCALE GENOMIC DNA]</scope>
    <source>
        <strain>ATCC BAA-895 / CDC 4225-83 / SGSC4696</strain>
    </source>
</reference>
<comment type="function">
    <text evidence="1">3'-5' exonuclease that prefers single-stranded DNA and RNA. May play a role in the H(2)O(2)-induced DNA damage repair.</text>
</comment>
<comment type="cofactor">
    <cofactor evidence="1">
        <name>Mg(2+)</name>
        <dbReference type="ChEBI" id="CHEBI:18420"/>
    </cofactor>
</comment>
<comment type="subunit">
    <text evidence="1">Monomer.</text>
</comment>
<comment type="subcellular location">
    <subcellularLocation>
        <location evidence="1">Cytoplasm</location>
    </subcellularLocation>
</comment>
<comment type="similarity">
    <text evidence="1">Belongs to the metallo-dependent hydrolases superfamily. TatD-type hydrolase family. TatD subfamily.</text>
</comment>
<comment type="sequence caution" evidence="2">
    <conflict type="erroneous initiation">
        <sequence resource="EMBL-CDS" id="ABV11351"/>
    </conflict>
    <text>Extended N-terminus.</text>
</comment>
<dbReference type="EC" id="3.1.11.-" evidence="1"/>
<dbReference type="EC" id="3.1.13.-" evidence="1"/>
<dbReference type="EMBL" id="CP000822">
    <property type="protein sequence ID" value="ABV11351.1"/>
    <property type="status" value="ALT_INIT"/>
    <property type="molecule type" value="Genomic_DNA"/>
</dbReference>
<dbReference type="RefSeq" id="WP_024130103.1">
    <property type="nucleotide sequence ID" value="NC_009792.1"/>
</dbReference>
<dbReference type="SMR" id="A8ACY8"/>
<dbReference type="STRING" id="290338.CKO_00182"/>
<dbReference type="GeneID" id="45134473"/>
<dbReference type="KEGG" id="cko:CKO_00182"/>
<dbReference type="HOGENOM" id="CLU_031506_1_2_6"/>
<dbReference type="OrthoDB" id="9810005at2"/>
<dbReference type="Proteomes" id="UP000008148">
    <property type="component" value="Chromosome"/>
</dbReference>
<dbReference type="GO" id="GO:0005737">
    <property type="term" value="C:cytoplasm"/>
    <property type="evidence" value="ECO:0007669"/>
    <property type="project" value="UniProtKB-SubCell"/>
</dbReference>
<dbReference type="GO" id="GO:0000175">
    <property type="term" value="F:3'-5'-RNA exonuclease activity"/>
    <property type="evidence" value="ECO:0007669"/>
    <property type="project" value="UniProtKB-UniRule"/>
</dbReference>
<dbReference type="GO" id="GO:0000287">
    <property type="term" value="F:magnesium ion binding"/>
    <property type="evidence" value="ECO:0007669"/>
    <property type="project" value="UniProtKB-UniRule"/>
</dbReference>
<dbReference type="GO" id="GO:0008310">
    <property type="term" value="F:single-stranded DNA 3'-5' DNA exonuclease activity"/>
    <property type="evidence" value="ECO:0007669"/>
    <property type="project" value="UniProtKB-UniRule"/>
</dbReference>
<dbReference type="CDD" id="cd01310">
    <property type="entry name" value="TatD_DNAse"/>
    <property type="match status" value="1"/>
</dbReference>
<dbReference type="FunFam" id="3.20.20.140:FF:000018">
    <property type="entry name" value="3'-5' ssDNA/RNA exonuclease TatD"/>
    <property type="match status" value="1"/>
</dbReference>
<dbReference type="Gene3D" id="3.20.20.140">
    <property type="entry name" value="Metal-dependent hydrolases"/>
    <property type="match status" value="1"/>
</dbReference>
<dbReference type="HAMAP" id="MF_00901">
    <property type="entry name" value="TatD_exonuclease"/>
    <property type="match status" value="1"/>
</dbReference>
<dbReference type="InterPro" id="IPR018228">
    <property type="entry name" value="DNase_TatD-rel_CS"/>
</dbReference>
<dbReference type="InterPro" id="IPR024918">
    <property type="entry name" value="Exonuc_TatD"/>
</dbReference>
<dbReference type="InterPro" id="IPR032466">
    <property type="entry name" value="Metal_Hydrolase"/>
</dbReference>
<dbReference type="InterPro" id="IPR001130">
    <property type="entry name" value="TatD-like"/>
</dbReference>
<dbReference type="InterPro" id="IPR050891">
    <property type="entry name" value="TatD-type_Hydrolase"/>
</dbReference>
<dbReference type="NCBIfam" id="NF007745">
    <property type="entry name" value="PRK10425.1"/>
    <property type="match status" value="1"/>
</dbReference>
<dbReference type="PANTHER" id="PTHR10060:SF15">
    <property type="entry name" value="DEOXYRIBONUCLEASE TATDN1"/>
    <property type="match status" value="1"/>
</dbReference>
<dbReference type="PANTHER" id="PTHR10060">
    <property type="entry name" value="TATD FAMILY DEOXYRIBONUCLEASE"/>
    <property type="match status" value="1"/>
</dbReference>
<dbReference type="Pfam" id="PF01026">
    <property type="entry name" value="TatD_DNase"/>
    <property type="match status" value="1"/>
</dbReference>
<dbReference type="PIRSF" id="PIRSF005902">
    <property type="entry name" value="DNase_TatD"/>
    <property type="match status" value="1"/>
</dbReference>
<dbReference type="SUPFAM" id="SSF51556">
    <property type="entry name" value="Metallo-dependent hydrolases"/>
    <property type="match status" value="1"/>
</dbReference>
<dbReference type="PROSITE" id="PS01091">
    <property type="entry name" value="TATD_3"/>
    <property type="match status" value="1"/>
</dbReference>
<gene>
    <name evidence="1" type="primary">tatD</name>
    <name type="ordered locus">CKO_00182</name>
</gene>
<protein>
    <recommendedName>
        <fullName evidence="1">3'-5' ssDNA/RNA exonuclease TatD</fullName>
        <ecNumber evidence="1">3.1.11.-</ecNumber>
        <ecNumber evidence="1">3.1.13.-</ecNumber>
    </recommendedName>
    <alternativeName>
        <fullName evidence="1">DNase TatD</fullName>
    </alternativeName>
</protein>
<name>TATD_CITK8</name>
<accession>A8ACY8</accession>
<evidence type="ECO:0000255" key="1">
    <source>
        <dbReference type="HAMAP-Rule" id="MF_00901"/>
    </source>
</evidence>
<evidence type="ECO:0000305" key="2"/>
<keyword id="KW-0963">Cytoplasm</keyword>
<keyword id="KW-0269">Exonuclease</keyword>
<keyword id="KW-0378">Hydrolase</keyword>
<keyword id="KW-0460">Magnesium</keyword>
<keyword id="KW-0479">Metal-binding</keyword>
<keyword id="KW-0540">Nuclease</keyword>
<keyword id="KW-1185">Reference proteome</keyword>
<proteinExistence type="inferred from homology"/>
<feature type="chain" id="PRO_0000412730" description="3'-5' ssDNA/RNA exonuclease TatD">
    <location>
        <begin position="1"/>
        <end position="260"/>
    </location>
</feature>
<feature type="binding site" evidence="1">
    <location>
        <position position="91"/>
    </location>
    <ligand>
        <name>a divalent metal cation</name>
        <dbReference type="ChEBI" id="CHEBI:60240"/>
    </ligand>
</feature>
<feature type="binding site" evidence="1">
    <location>
        <position position="127"/>
    </location>
    <ligand>
        <name>a divalent metal cation</name>
        <dbReference type="ChEBI" id="CHEBI:60240"/>
    </ligand>
</feature>
<feature type="binding site" evidence="1">
    <location>
        <position position="152"/>
    </location>
    <ligand>
        <name>a divalent metal cation</name>
        <dbReference type="ChEBI" id="CHEBI:60240"/>
    </ligand>
</feature>
<organism>
    <name type="scientific">Citrobacter koseri (strain ATCC BAA-895 / CDC 4225-83 / SGSC4696)</name>
    <dbReference type="NCBI Taxonomy" id="290338"/>
    <lineage>
        <taxon>Bacteria</taxon>
        <taxon>Pseudomonadati</taxon>
        <taxon>Pseudomonadota</taxon>
        <taxon>Gammaproteobacteria</taxon>
        <taxon>Enterobacterales</taxon>
        <taxon>Enterobacteriaceae</taxon>
        <taxon>Citrobacter</taxon>
    </lineage>
</organism>